<organism>
    <name type="scientific">Pongo pygmaeus</name>
    <name type="common">Bornean orangutan</name>
    <dbReference type="NCBI Taxonomy" id="9600"/>
    <lineage>
        <taxon>Eukaryota</taxon>
        <taxon>Metazoa</taxon>
        <taxon>Chordata</taxon>
        <taxon>Craniata</taxon>
        <taxon>Vertebrata</taxon>
        <taxon>Euteleostomi</taxon>
        <taxon>Mammalia</taxon>
        <taxon>Eutheria</taxon>
        <taxon>Euarchontoglires</taxon>
        <taxon>Primates</taxon>
        <taxon>Haplorrhini</taxon>
        <taxon>Catarrhini</taxon>
        <taxon>Hominidae</taxon>
        <taxon>Pongo</taxon>
    </lineage>
</organism>
<name>COX7C_PONPY</name>
<comment type="function">
    <text evidence="2">Component of the cytochrome c oxidase, the last enzyme in the mitochondrial electron transport chain which drives oxidative phosphorylation. The respiratory chain contains 3 multisubunit complexes succinate dehydrogenase (complex II, CII), ubiquinol-cytochrome c oxidoreductase (cytochrome b-c1 complex, complex III, CIII) and cytochrome c oxidase (complex IV, CIV), that cooperate to transfer electrons derived from NADH and succinate to molecular oxygen, creating an electrochemical gradient over the inner membrane that drives transmembrane transport and the ATP synthase. Cytochrome c oxidase is the component of the respiratory chain that catalyzes the reduction of oxygen to water. Electrons originating from reduced cytochrome c in the intermembrane space (IMS) are transferred via the dinuclear copper A center (CU(A)) of subunit 2 and heme A of subunit 1 to the active site in subunit 1, a binuclear center (BNC) formed by heme A3 and copper B (CU(B)). The BNC reduces molecular oxygen to 2 water molecules using 4 electrons from cytochrome c in the IMS and 4 protons from the mitochondrial matrix.</text>
</comment>
<comment type="pathway">
    <text evidence="2">Energy metabolism; oxidative phosphorylation.</text>
</comment>
<comment type="subunit">
    <text evidence="1 3">Component of the cytochrome c oxidase (complex IV, CIV), a multisubunit enzyme composed of 14 subunits. The complex is composed of a catalytic core of 3 subunits MT-CO1, MT-CO2 and MT-CO3, encoded in the mitochondrial DNA, and 11 supernumerary subunits COX4I, COX5A, COX5B, COX6A, COX6B, COX6C, COX7A, COX7B, COX7C, COX8 and NDUFA4, which are encoded in the nuclear genome. The complex exists as a monomer or a dimer and forms supercomplexes (SCs) in the inner mitochondrial membrane with NADH-ubiquinone oxidoreductase (complex I, CI) and ubiquinol-cytochrome c oxidoreductase (cytochrome b-c1 complex, complex III, CIII), resulting in different assemblies (supercomplex SCI(1)III(2)IV(1) and megacomplex MCI(2)III(2)IV(2)) (By similarity). Interacts with RAB5IF (By similarity).</text>
</comment>
<comment type="subcellular location">
    <subcellularLocation>
        <location evidence="1">Mitochondrion inner membrane</location>
        <topology evidence="1">Single-pass membrane protein</topology>
    </subcellularLocation>
</comment>
<comment type="similarity">
    <text evidence="5">Belongs to the cytochrome c oxidase VIIc family.</text>
</comment>
<evidence type="ECO:0000250" key="1">
    <source>
        <dbReference type="UniProtKB" id="P00430"/>
    </source>
</evidence>
<evidence type="ECO:0000250" key="2">
    <source>
        <dbReference type="UniProtKB" id="P04039"/>
    </source>
</evidence>
<evidence type="ECO:0000250" key="3">
    <source>
        <dbReference type="UniProtKB" id="P15954"/>
    </source>
</evidence>
<evidence type="ECO:0000250" key="4">
    <source>
        <dbReference type="UniProtKB" id="P17665"/>
    </source>
</evidence>
<evidence type="ECO:0000305" key="5"/>
<proteinExistence type="inferred from homology"/>
<reference key="1">
    <citation type="journal article" date="2002" name="Genomics">
        <title>Search for genes positively selected during primate evolution by 5'-end-sequence screening of cynomolgus monkey cDNAs.</title>
        <authorList>
            <person name="Osada N."/>
            <person name="Kusuda J."/>
            <person name="Hirata M."/>
            <person name="Tanuma R."/>
            <person name="Hida M."/>
            <person name="Sugano S."/>
            <person name="Hirai M."/>
            <person name="Hashimoto K."/>
        </authorList>
    </citation>
    <scope>NUCLEOTIDE SEQUENCE [GENOMIC DNA]</scope>
</reference>
<reference key="2">
    <citation type="submission" date="2004-11" db="EMBL/GenBank/DDBJ databases">
        <authorList>
            <consortium name="The German cDNA consortium"/>
        </authorList>
    </citation>
    <scope>NUCLEOTIDE SEQUENCE [LARGE SCALE MRNA]</scope>
    <source>
        <tissue>Brain cortex</tissue>
    </source>
</reference>
<dbReference type="EMBL" id="AB072319">
    <property type="protein sequence ID" value="BAB86874.1"/>
    <property type="molecule type" value="Genomic_DNA"/>
</dbReference>
<dbReference type="EMBL" id="CR925995">
    <property type="protein sequence ID" value="CAI29637.1"/>
    <property type="molecule type" value="mRNA"/>
</dbReference>
<dbReference type="SMR" id="Q8SQ81"/>
<dbReference type="KEGG" id="pon:100174116"/>
<dbReference type="UniPathway" id="UPA00705"/>
<dbReference type="GO" id="GO:0005743">
    <property type="term" value="C:mitochondrial inner membrane"/>
    <property type="evidence" value="ECO:0007669"/>
    <property type="project" value="UniProtKB-SubCell"/>
</dbReference>
<dbReference type="GO" id="GO:0045277">
    <property type="term" value="C:respiratory chain complex IV"/>
    <property type="evidence" value="ECO:0007669"/>
    <property type="project" value="InterPro"/>
</dbReference>
<dbReference type="GO" id="GO:0006123">
    <property type="term" value="P:mitochondrial electron transport, cytochrome c to oxygen"/>
    <property type="evidence" value="ECO:0007669"/>
    <property type="project" value="InterPro"/>
</dbReference>
<dbReference type="CDD" id="cd00929">
    <property type="entry name" value="Cyt_c_Oxidase_VIIc"/>
    <property type="match status" value="1"/>
</dbReference>
<dbReference type="FunFam" id="4.10.49.10:FF:000001">
    <property type="entry name" value="Cytochrome c oxidase subunit 7C"/>
    <property type="match status" value="1"/>
</dbReference>
<dbReference type="Gene3D" id="4.10.49.10">
    <property type="entry name" value="Cytochrome c oxidase subunit VIIc"/>
    <property type="match status" value="1"/>
</dbReference>
<dbReference type="InterPro" id="IPR004202">
    <property type="entry name" value="COX7C/Cox8"/>
</dbReference>
<dbReference type="InterPro" id="IPR036636">
    <property type="entry name" value="COX7C/Cox8_sf"/>
</dbReference>
<dbReference type="PANTHER" id="PTHR13313:SF1">
    <property type="entry name" value="CYTOCHROME C OXIDASE SUBUNIT 7C, MITOCHONDRIAL"/>
    <property type="match status" value="1"/>
</dbReference>
<dbReference type="PANTHER" id="PTHR13313">
    <property type="entry name" value="CYTOCHROME C OXIDASE SUBUNIT VIIC"/>
    <property type="match status" value="1"/>
</dbReference>
<dbReference type="Pfam" id="PF02935">
    <property type="entry name" value="COX7C"/>
    <property type="match status" value="1"/>
</dbReference>
<dbReference type="SUPFAM" id="SSF81427">
    <property type="entry name" value="Mitochondrial cytochrome c oxidase subunit VIIc (aka VIIIa)"/>
    <property type="match status" value="1"/>
</dbReference>
<sequence>MLGQSIRRFTTSVVRRSHYEEGPGKNLPFSVENKWSLLAKMCLYFGSAFATPFLIVRHQLLKT</sequence>
<protein>
    <recommendedName>
        <fullName>Cytochrome c oxidase subunit 7C, mitochondrial</fullName>
    </recommendedName>
    <alternativeName>
        <fullName>Cytochrome c oxidase polypeptide VIIc</fullName>
    </alternativeName>
</protein>
<gene>
    <name type="primary">COX7C</name>
</gene>
<feature type="transit peptide" description="Mitochondrion" evidence="1">
    <location>
        <begin position="1"/>
        <end position="16"/>
    </location>
</feature>
<feature type="chain" id="PRO_0000006170" description="Cytochrome c oxidase subunit 7C, mitochondrial">
    <location>
        <begin position="17"/>
        <end position="63"/>
    </location>
</feature>
<feature type="topological domain" description="Mitochondrial matrix" evidence="1">
    <location>
        <begin position="17"/>
        <end position="33"/>
    </location>
</feature>
<feature type="transmembrane region" description="Helical" evidence="1">
    <location>
        <begin position="34"/>
        <end position="60"/>
    </location>
</feature>
<feature type="topological domain" description="Mitochondrial intermembrane" evidence="1">
    <location>
        <begin position="61"/>
        <end position="63"/>
    </location>
</feature>
<feature type="modified residue" description="N6-acetyllysine; alternate" evidence="4">
    <location>
        <position position="25"/>
    </location>
</feature>
<feature type="modified residue" description="N6-succinyllysine; alternate" evidence="4">
    <location>
        <position position="25"/>
    </location>
</feature>
<keyword id="KW-0007">Acetylation</keyword>
<keyword id="KW-0472">Membrane</keyword>
<keyword id="KW-0496">Mitochondrion</keyword>
<keyword id="KW-0999">Mitochondrion inner membrane</keyword>
<keyword id="KW-0809">Transit peptide</keyword>
<keyword id="KW-0812">Transmembrane</keyword>
<keyword id="KW-1133">Transmembrane helix</keyword>
<accession>Q8SQ81</accession>